<proteinExistence type="evidence at protein level"/>
<reference key="1">
    <citation type="journal article" date="1997" name="Nature">
        <title>The complete genome sequence of the Gram-positive bacterium Bacillus subtilis.</title>
        <authorList>
            <person name="Kunst F."/>
            <person name="Ogasawara N."/>
            <person name="Moszer I."/>
            <person name="Albertini A.M."/>
            <person name="Alloni G."/>
            <person name="Azevedo V."/>
            <person name="Bertero M.G."/>
            <person name="Bessieres P."/>
            <person name="Bolotin A."/>
            <person name="Borchert S."/>
            <person name="Borriss R."/>
            <person name="Boursier L."/>
            <person name="Brans A."/>
            <person name="Braun M."/>
            <person name="Brignell S.C."/>
            <person name="Bron S."/>
            <person name="Brouillet S."/>
            <person name="Bruschi C.V."/>
            <person name="Caldwell B."/>
            <person name="Capuano V."/>
            <person name="Carter N.M."/>
            <person name="Choi S.-K."/>
            <person name="Codani J.-J."/>
            <person name="Connerton I.F."/>
            <person name="Cummings N.J."/>
            <person name="Daniel R.A."/>
            <person name="Denizot F."/>
            <person name="Devine K.M."/>
            <person name="Duesterhoeft A."/>
            <person name="Ehrlich S.D."/>
            <person name="Emmerson P.T."/>
            <person name="Entian K.-D."/>
            <person name="Errington J."/>
            <person name="Fabret C."/>
            <person name="Ferrari E."/>
            <person name="Foulger D."/>
            <person name="Fritz C."/>
            <person name="Fujita M."/>
            <person name="Fujita Y."/>
            <person name="Fuma S."/>
            <person name="Galizzi A."/>
            <person name="Galleron N."/>
            <person name="Ghim S.-Y."/>
            <person name="Glaser P."/>
            <person name="Goffeau A."/>
            <person name="Golightly E.J."/>
            <person name="Grandi G."/>
            <person name="Guiseppi G."/>
            <person name="Guy B.J."/>
            <person name="Haga K."/>
            <person name="Haiech J."/>
            <person name="Harwood C.R."/>
            <person name="Henaut A."/>
            <person name="Hilbert H."/>
            <person name="Holsappel S."/>
            <person name="Hosono S."/>
            <person name="Hullo M.-F."/>
            <person name="Itaya M."/>
            <person name="Jones L.-M."/>
            <person name="Joris B."/>
            <person name="Karamata D."/>
            <person name="Kasahara Y."/>
            <person name="Klaerr-Blanchard M."/>
            <person name="Klein C."/>
            <person name="Kobayashi Y."/>
            <person name="Koetter P."/>
            <person name="Koningstein G."/>
            <person name="Krogh S."/>
            <person name="Kumano M."/>
            <person name="Kurita K."/>
            <person name="Lapidus A."/>
            <person name="Lardinois S."/>
            <person name="Lauber J."/>
            <person name="Lazarevic V."/>
            <person name="Lee S.-M."/>
            <person name="Levine A."/>
            <person name="Liu H."/>
            <person name="Masuda S."/>
            <person name="Mauel C."/>
            <person name="Medigue C."/>
            <person name="Medina N."/>
            <person name="Mellado R.P."/>
            <person name="Mizuno M."/>
            <person name="Moestl D."/>
            <person name="Nakai S."/>
            <person name="Noback M."/>
            <person name="Noone D."/>
            <person name="O'Reilly M."/>
            <person name="Ogawa K."/>
            <person name="Ogiwara A."/>
            <person name="Oudega B."/>
            <person name="Park S.-H."/>
            <person name="Parro V."/>
            <person name="Pohl T.M."/>
            <person name="Portetelle D."/>
            <person name="Porwollik S."/>
            <person name="Prescott A.M."/>
            <person name="Presecan E."/>
            <person name="Pujic P."/>
            <person name="Purnelle B."/>
            <person name="Rapoport G."/>
            <person name="Rey M."/>
            <person name="Reynolds S."/>
            <person name="Rieger M."/>
            <person name="Rivolta C."/>
            <person name="Rocha E."/>
            <person name="Roche B."/>
            <person name="Rose M."/>
            <person name="Sadaie Y."/>
            <person name="Sato T."/>
            <person name="Scanlan E."/>
            <person name="Schleich S."/>
            <person name="Schroeter R."/>
            <person name="Scoffone F."/>
            <person name="Sekiguchi J."/>
            <person name="Sekowska A."/>
            <person name="Seror S.J."/>
            <person name="Serror P."/>
            <person name="Shin B.-S."/>
            <person name="Soldo B."/>
            <person name="Sorokin A."/>
            <person name="Tacconi E."/>
            <person name="Takagi T."/>
            <person name="Takahashi H."/>
            <person name="Takemaru K."/>
            <person name="Takeuchi M."/>
            <person name="Tamakoshi A."/>
            <person name="Tanaka T."/>
            <person name="Terpstra P."/>
            <person name="Tognoni A."/>
            <person name="Tosato V."/>
            <person name="Uchiyama S."/>
            <person name="Vandenbol M."/>
            <person name="Vannier F."/>
            <person name="Vassarotti A."/>
            <person name="Viari A."/>
            <person name="Wambutt R."/>
            <person name="Wedler E."/>
            <person name="Wedler H."/>
            <person name="Weitzenegger T."/>
            <person name="Winters P."/>
            <person name="Wipat A."/>
            <person name="Yamamoto H."/>
            <person name="Yamane K."/>
            <person name="Yasumoto K."/>
            <person name="Yata K."/>
            <person name="Yoshida K."/>
            <person name="Yoshikawa H.-F."/>
            <person name="Zumstein E."/>
            <person name="Yoshikawa H."/>
            <person name="Danchin A."/>
        </authorList>
    </citation>
    <scope>NUCLEOTIDE SEQUENCE [LARGE SCALE GENOMIC DNA]</scope>
    <source>
        <strain>168</strain>
    </source>
</reference>
<reference key="2">
    <citation type="journal article" date="2008" name="Mol. Microbiol.">
        <title>SlrR/SlrA controls the initiation of biofilm formation in Bacillus subtilis.</title>
        <authorList>
            <person name="Kobayashi K."/>
        </authorList>
    </citation>
    <scope>IDENTIFICATION</scope>
    <scope>FUNCTION</scope>
    <scope>SUBUNIT</scope>
    <scope>DISRUPTION PHENOTYPE</scope>
</reference>
<name>SLRA_BACSU</name>
<organism>
    <name type="scientific">Bacillus subtilis (strain 168)</name>
    <dbReference type="NCBI Taxonomy" id="224308"/>
    <lineage>
        <taxon>Bacteria</taxon>
        <taxon>Bacillati</taxon>
        <taxon>Bacillota</taxon>
        <taxon>Bacilli</taxon>
        <taxon>Bacillales</taxon>
        <taxon>Bacillaceae</taxon>
        <taxon>Bacillus</taxon>
    </lineage>
</organism>
<dbReference type="EMBL" id="AL009126">
    <property type="protein sequence ID" value="CAX52707.1"/>
    <property type="molecule type" value="Genomic_DNA"/>
</dbReference>
<dbReference type="RefSeq" id="WP_003243648.1">
    <property type="nucleotide sequence ID" value="NZ_OZ025638.1"/>
</dbReference>
<dbReference type="RefSeq" id="YP_003097794.1">
    <property type="nucleotide sequence ID" value="NC_000964.3"/>
</dbReference>
<dbReference type="SMR" id="P0C8M5"/>
<dbReference type="STRING" id="224308.BSU38229"/>
<dbReference type="PaxDb" id="224308-BSU38229"/>
<dbReference type="EnsemblBacteria" id="CAX52707">
    <property type="protein sequence ID" value="CAX52707"/>
    <property type="gene ID" value="BSU_38229"/>
</dbReference>
<dbReference type="GeneID" id="8303165"/>
<dbReference type="KEGG" id="bsu:BSU38229"/>
<dbReference type="PATRIC" id="fig|224308.179.peg.4138"/>
<dbReference type="InParanoid" id="P0C8M5"/>
<dbReference type="OrthoDB" id="2936084at2"/>
<dbReference type="BioCyc" id="BSUB:BSU38229-MONOMER"/>
<dbReference type="Proteomes" id="UP000001570">
    <property type="component" value="Chromosome"/>
</dbReference>
<dbReference type="GO" id="GO:0046983">
    <property type="term" value="F:protein dimerization activity"/>
    <property type="evidence" value="ECO:0007669"/>
    <property type="project" value="InterPro"/>
</dbReference>
<dbReference type="GO" id="GO:0006355">
    <property type="term" value="P:regulation of DNA-templated transcription"/>
    <property type="evidence" value="ECO:0007669"/>
    <property type="project" value="InterPro"/>
</dbReference>
<dbReference type="InterPro" id="IPR010981">
    <property type="entry name" value="SinR/SinI_dimer_dom"/>
</dbReference>
<dbReference type="InterPro" id="IPR036281">
    <property type="entry name" value="SinR/SinI_dimer_dom_sf"/>
</dbReference>
<dbReference type="Pfam" id="PF08671">
    <property type="entry name" value="SinI"/>
    <property type="match status" value="1"/>
</dbReference>
<dbReference type="SUPFAM" id="SSF47406">
    <property type="entry name" value="SinR repressor dimerisation domain-like"/>
    <property type="match status" value="1"/>
</dbReference>
<dbReference type="PROSITE" id="PS51500">
    <property type="entry name" value="SIN"/>
    <property type="match status" value="1"/>
</dbReference>
<keyword id="KW-1185">Reference proteome</keyword>
<keyword id="KW-0804">Transcription</keyword>
<keyword id="KW-0805">Transcription regulation</keyword>
<feature type="chain" id="PRO_0000360154" description="Transcriptional regulator SlrA">
    <location>
        <begin position="1"/>
        <end position="52"/>
    </location>
</feature>
<feature type="domain" description="Sin" evidence="1">
    <location>
        <begin position="1"/>
        <end position="38"/>
    </location>
</feature>
<sequence>MKTHVKKDLDKGWHMLIQEARSIGLGIHDVRQFLESETASRKKNHKKTVRQD</sequence>
<accession>P0C8M5</accession>
<accession>C0H3S7</accession>
<comment type="function">
    <text evidence="2">Required specifically for induction of eps and yqxM operons by antagonizing SinR. Regulates SlrR activity. Controls the initiation of biofilm formation.</text>
</comment>
<comment type="subunit">
    <text evidence="2">Component of the SlrR/SlrA complex.</text>
</comment>
<comment type="disruption phenotype">
    <text evidence="2">Defective in biofilm formation.</text>
</comment>
<protein>
    <recommendedName>
        <fullName>Transcriptional regulator SlrA</fullName>
    </recommendedName>
</protein>
<evidence type="ECO:0000255" key="1">
    <source>
        <dbReference type="PROSITE-ProRule" id="PRU00833"/>
    </source>
</evidence>
<evidence type="ECO:0000269" key="2">
    <source>
    </source>
</evidence>
<gene>
    <name type="primary">slrA</name>
    <name type="ordered locus">BSU38229</name>
</gene>